<comment type="function">
    <text evidence="1">An accessory protein needed during the final step in the assembly of 30S ribosomal subunit, possibly for assembly of the head region. Essential for efficient processing of 16S rRNA. May be needed both before and after RbfA during the maturation of 16S rRNA. It has affinity for free ribosomal 30S subunits but not for 70S ribosomes.</text>
</comment>
<comment type="subunit">
    <text evidence="1">Binds ribosomal protein uS19.</text>
</comment>
<comment type="subcellular location">
    <subcellularLocation>
        <location evidence="1">Cytoplasm</location>
    </subcellularLocation>
</comment>
<comment type="domain">
    <text evidence="1">The PRC barrel domain binds ribosomal protein uS19.</text>
</comment>
<comment type="similarity">
    <text evidence="1">Belongs to the RimM family.</text>
</comment>
<organism>
    <name type="scientific">Actinobacillus pleuropneumoniae serotype 7 (strain AP76)</name>
    <dbReference type="NCBI Taxonomy" id="537457"/>
    <lineage>
        <taxon>Bacteria</taxon>
        <taxon>Pseudomonadati</taxon>
        <taxon>Pseudomonadota</taxon>
        <taxon>Gammaproteobacteria</taxon>
        <taxon>Pasteurellales</taxon>
        <taxon>Pasteurellaceae</taxon>
        <taxon>Actinobacillus</taxon>
    </lineage>
</organism>
<sequence>MSEQKIEVVGKLGSTYGIRGWLRLYSSTEETESIFDYQPWFLKIKGQWQPIELESWRYHNNDLIVKLKGSDDRESAQLLTNAEIGVDLSVFPELEEGDYYWHDLIGCQVINLEDYSMGVVTELMETGSNDVLVVRANSKDAFGKQERLIPFLYEQVVKRVDLATKTITVDWDAGF</sequence>
<accession>B3GZ39</accession>
<reference key="1">
    <citation type="submission" date="2008-06" db="EMBL/GenBank/DDBJ databases">
        <title>Genome and proteome analysis of A. pleuropneumoniae serotype 7.</title>
        <authorList>
            <person name="Linke B."/>
            <person name="Buettner F."/>
            <person name="Martinez-Arias R."/>
            <person name="Goesmann A."/>
            <person name="Baltes N."/>
            <person name="Tegetmeyer H."/>
            <person name="Singh M."/>
            <person name="Gerlach G.F."/>
        </authorList>
    </citation>
    <scope>NUCLEOTIDE SEQUENCE [LARGE SCALE GENOMIC DNA]</scope>
    <source>
        <strain>AP76</strain>
    </source>
</reference>
<name>RIMM_ACTP7</name>
<dbReference type="EMBL" id="CP001091">
    <property type="protein sequence ID" value="ACE62525.1"/>
    <property type="molecule type" value="Genomic_DNA"/>
</dbReference>
<dbReference type="RefSeq" id="WP_005599336.1">
    <property type="nucleotide sequence ID" value="NC_010939.1"/>
</dbReference>
<dbReference type="SMR" id="B3GZ39"/>
<dbReference type="GeneID" id="48600080"/>
<dbReference type="KEGG" id="apa:APP7_1873"/>
<dbReference type="HOGENOM" id="CLU_077636_1_0_6"/>
<dbReference type="Proteomes" id="UP000001226">
    <property type="component" value="Chromosome"/>
</dbReference>
<dbReference type="GO" id="GO:0005737">
    <property type="term" value="C:cytoplasm"/>
    <property type="evidence" value="ECO:0007669"/>
    <property type="project" value="UniProtKB-SubCell"/>
</dbReference>
<dbReference type="GO" id="GO:0005840">
    <property type="term" value="C:ribosome"/>
    <property type="evidence" value="ECO:0007669"/>
    <property type="project" value="InterPro"/>
</dbReference>
<dbReference type="GO" id="GO:0043022">
    <property type="term" value="F:ribosome binding"/>
    <property type="evidence" value="ECO:0007669"/>
    <property type="project" value="InterPro"/>
</dbReference>
<dbReference type="GO" id="GO:0042274">
    <property type="term" value="P:ribosomal small subunit biogenesis"/>
    <property type="evidence" value="ECO:0007669"/>
    <property type="project" value="UniProtKB-UniRule"/>
</dbReference>
<dbReference type="GO" id="GO:0006364">
    <property type="term" value="P:rRNA processing"/>
    <property type="evidence" value="ECO:0007669"/>
    <property type="project" value="UniProtKB-UniRule"/>
</dbReference>
<dbReference type="Gene3D" id="2.30.30.240">
    <property type="entry name" value="PRC-barrel domain"/>
    <property type="match status" value="1"/>
</dbReference>
<dbReference type="Gene3D" id="2.40.30.60">
    <property type="entry name" value="RimM"/>
    <property type="match status" value="1"/>
</dbReference>
<dbReference type="HAMAP" id="MF_00014">
    <property type="entry name" value="Ribosome_mat_RimM"/>
    <property type="match status" value="1"/>
</dbReference>
<dbReference type="InterPro" id="IPR011033">
    <property type="entry name" value="PRC_barrel-like_sf"/>
</dbReference>
<dbReference type="InterPro" id="IPR056792">
    <property type="entry name" value="PRC_RimM"/>
</dbReference>
<dbReference type="InterPro" id="IPR011961">
    <property type="entry name" value="RimM"/>
</dbReference>
<dbReference type="InterPro" id="IPR002676">
    <property type="entry name" value="RimM_N"/>
</dbReference>
<dbReference type="InterPro" id="IPR036976">
    <property type="entry name" value="RimM_N_sf"/>
</dbReference>
<dbReference type="InterPro" id="IPR009000">
    <property type="entry name" value="Transl_B-barrel_sf"/>
</dbReference>
<dbReference type="NCBIfam" id="TIGR02273">
    <property type="entry name" value="16S_RimM"/>
    <property type="match status" value="1"/>
</dbReference>
<dbReference type="PANTHER" id="PTHR33692">
    <property type="entry name" value="RIBOSOME MATURATION FACTOR RIMM"/>
    <property type="match status" value="1"/>
</dbReference>
<dbReference type="PANTHER" id="PTHR33692:SF1">
    <property type="entry name" value="RIBOSOME MATURATION FACTOR RIMM"/>
    <property type="match status" value="1"/>
</dbReference>
<dbReference type="Pfam" id="PF24986">
    <property type="entry name" value="PRC_RimM"/>
    <property type="match status" value="1"/>
</dbReference>
<dbReference type="Pfam" id="PF01782">
    <property type="entry name" value="RimM"/>
    <property type="match status" value="1"/>
</dbReference>
<dbReference type="SUPFAM" id="SSF50346">
    <property type="entry name" value="PRC-barrel domain"/>
    <property type="match status" value="1"/>
</dbReference>
<dbReference type="SUPFAM" id="SSF50447">
    <property type="entry name" value="Translation proteins"/>
    <property type="match status" value="1"/>
</dbReference>
<proteinExistence type="inferred from homology"/>
<protein>
    <recommendedName>
        <fullName evidence="1">Ribosome maturation factor RimM</fullName>
    </recommendedName>
</protein>
<evidence type="ECO:0000255" key="1">
    <source>
        <dbReference type="HAMAP-Rule" id="MF_00014"/>
    </source>
</evidence>
<feature type="chain" id="PRO_1000089485" description="Ribosome maturation factor RimM">
    <location>
        <begin position="1"/>
        <end position="175"/>
    </location>
</feature>
<feature type="domain" description="PRC barrel" evidence="1">
    <location>
        <begin position="95"/>
        <end position="175"/>
    </location>
</feature>
<keyword id="KW-0143">Chaperone</keyword>
<keyword id="KW-0963">Cytoplasm</keyword>
<keyword id="KW-0690">Ribosome biogenesis</keyword>
<keyword id="KW-0698">rRNA processing</keyword>
<gene>
    <name evidence="1" type="primary">rimM</name>
    <name type="ordered locus">APP7_1873</name>
</gene>